<name>VPS15_CANGA</name>
<proteinExistence type="inferred from homology"/>
<evidence type="ECO:0000250" key="1">
    <source>
        <dbReference type="UniProtKB" id="P22219"/>
    </source>
</evidence>
<evidence type="ECO:0000250" key="2">
    <source>
        <dbReference type="UniProtKB" id="P22543"/>
    </source>
</evidence>
<evidence type="ECO:0000255" key="3"/>
<evidence type="ECO:0000255" key="4">
    <source>
        <dbReference type="PROSITE-ProRule" id="PRU00159"/>
    </source>
</evidence>
<evidence type="ECO:0000269" key="5">
    <source>
    </source>
</evidence>
<evidence type="ECO:0000303" key="6">
    <source>
    </source>
</evidence>
<protein>
    <recommendedName>
        <fullName evidence="6">non-specific serine/threonine protein kinase</fullName>
        <ecNumber evidence="4">2.7.11.1</ecNumber>
    </recommendedName>
</protein>
<keyword id="KW-0067">ATP-binding</keyword>
<keyword id="KW-0072">Autophagy</keyword>
<keyword id="KW-0967">Endosome</keyword>
<keyword id="KW-0333">Golgi apparatus</keyword>
<keyword id="KW-0418">Kinase</keyword>
<keyword id="KW-0449">Lipoprotein</keyword>
<keyword id="KW-0472">Membrane</keyword>
<keyword id="KW-0547">Nucleotide-binding</keyword>
<keyword id="KW-1185">Reference proteome</keyword>
<keyword id="KW-0677">Repeat</keyword>
<keyword id="KW-0723">Serine/threonine-protein kinase</keyword>
<keyword id="KW-0808">Transferase</keyword>
<keyword id="KW-0853">WD repeat</keyword>
<feature type="chain" id="PRO_0000458894" description="non-specific serine/threonine protein kinase">
    <location>
        <begin position="1"/>
        <end position="1410"/>
    </location>
</feature>
<feature type="domain" description="Protein kinase" evidence="4">
    <location>
        <begin position="27"/>
        <end position="299"/>
    </location>
</feature>
<feature type="repeat" description="HEAT 1" evidence="3">
    <location>
        <begin position="441"/>
        <end position="478"/>
    </location>
</feature>
<feature type="repeat" description="HEAT 2" evidence="3">
    <location>
        <begin position="485"/>
        <end position="525"/>
    </location>
</feature>
<feature type="repeat" description="HEAT 3" evidence="3">
    <location>
        <begin position="556"/>
        <end position="594"/>
    </location>
</feature>
<feature type="repeat" description="HEAT 4" evidence="3">
    <location>
        <begin position="596"/>
        <end position="633"/>
    </location>
</feature>
<feature type="repeat" description="HEAT 5" evidence="3">
    <location>
        <begin position="635"/>
        <end position="672"/>
    </location>
</feature>
<feature type="repeat" description="WD 1" evidence="3">
    <location>
        <begin position="1037"/>
        <end position="1076"/>
    </location>
</feature>
<feature type="repeat" description="WD 2" evidence="3">
    <location>
        <begin position="1187"/>
        <end position="1226"/>
    </location>
</feature>
<feature type="repeat" description="WD 3" evidence="3">
    <location>
        <begin position="1230"/>
        <end position="1273"/>
    </location>
</feature>
<feature type="active site" description="Proton acceptor" evidence="4">
    <location>
        <position position="147"/>
    </location>
</feature>
<feature type="binding site" evidence="4">
    <location>
        <begin position="33"/>
        <end position="41"/>
    </location>
    <ligand>
        <name>ATP</name>
        <dbReference type="ChEBI" id="CHEBI:30616"/>
    </ligand>
</feature>
<feature type="binding site" evidence="4">
    <location>
        <position position="54"/>
    </location>
    <ligand>
        <name>ATP</name>
        <dbReference type="ChEBI" id="CHEBI:30616"/>
    </ligand>
</feature>
<organism>
    <name type="scientific">Candida glabrata (strain ATCC 2001 / BCRC 20586 / JCM 3761 / NBRC 0622 / NRRL Y-65 / CBS 138)</name>
    <name type="common">Yeast</name>
    <name type="synonym">Nakaseomyces glabratus</name>
    <dbReference type="NCBI Taxonomy" id="284593"/>
    <lineage>
        <taxon>Eukaryota</taxon>
        <taxon>Fungi</taxon>
        <taxon>Dikarya</taxon>
        <taxon>Ascomycota</taxon>
        <taxon>Saccharomycotina</taxon>
        <taxon>Saccharomycetes</taxon>
        <taxon>Saccharomycetales</taxon>
        <taxon>Saccharomycetaceae</taxon>
        <taxon>Nakaseomyces</taxon>
    </lineage>
</organism>
<sequence length="1410" mass="161501">MGGQLSLLAQTAPSIGIFSYIDILDETHYVSQLNNSRFLKTCKALDPNGEIVVKVFIKPKEDSSLEKIIQRLKREAVLLSALPNVLNYSKIFESTRCGYLVRQHLKTNLYDRLSTRPYFTEIETKFVVFQLLQALKDIHDLDVIHGDIKTENLLLTSWDWVVLSDFCSNIKPAYIPDDNPGEFSFYFDTSKRRACYLAPEKFDSAKASGDGVHQATKEMDIFSLGCCIAELYLDGAALFNLSQLFKYKSGDYTLNDILPQTISKSSPVLKDILQDMLQVDPKKRLSAHELLEKYRTIYFPDTFYDFLYDYCKTLVTLGTSVPCADQIEVNTTLQDHLGSIDEILIKIYCDFGRICKSLKLPVLDQEDMNYNTKDSFLRVSDKLLRLENYETDKITASIQNEVSLIILVFLCKEFRNLQFPENKVKALQLILAFSLFVLDDTKLDRTLPYLVAALEDDSTRVKVMAMNCVTTLIKEVKHPNQLNENIFVDYLLPRVQALLQNGQEESLVRVAIASNLSDLALKANLFQEYCHTMQSSTIPNIVHDFESIEVIRKYSRKLQQLFEDLTVSILTDPEISVKVALLKNILPLCKYFGREKTNDVILSHLITYLNDRDPALRMYLVECISGIAILLGPITMEQYILPLIIQTITDEEELVVVSVLKNLKDLLKTRFVNKKYFYDITKFLSPLILHPNSWIRNFVLTTLVECINQMSKAEVYCVLYPVLRPFFDFDVDFTGDMLISCAKLPVSRNTYNLLRSWNNRSKKTFFWQRVTTNYVDAFGNSTINFVDKRYVKENYGLKTMKVESNIHLHTNENENIPLTLEDKFWIDKFKNSGLTDNELWKIVALREYVVRSSRSSSKKPETVTSIVSKLSLTPSNFSIENVMPNTVFFDIEFLHPETLTFNDLDVTNTNSIKESESNTFTDNHSKVIEMKGSLIFKTPRIPTTLSNLKNIYVQLEPTNNHSEGHAHLSARNQPANFIVKSSYEGQDKIIEKYLKQLNILPSLKEYKEFGFVSENTTAEADVINLHGKFVRSYPQIFDGTLLQSEVLLGTKSFMIYGSDQGALTVWDIDRLANEKSITRPLYYECSAEITCIKGLSGYDSFCVGLKSSEILIFRISLSKNGKAKNLQELICIRSLNLIGENSSEYPIQIECCPNNDQFQLVVLSNYSNVYLFDIRTMKVIEKLELNADYGCTISMVLDDKNNLLFFGTVSGIIEMWDARYFVQIRAWTFGESLPINKLAIMEQENKSLLVVCGGVDSAFFTLWNIEKLSCKHVFVRSNEQPSLDSFNVIDADKLDKLAFEKNNSNIKPIVQIFNNKVLYMDDIGRLLHILDTRNPEKSSTFAGSKVELHSFSVLQVTASLTMSLQKHNYQKEVNNSNYTSSRVMTVNVFQLKNKPYMLLTDEEGYINIYT</sequence>
<accession>Q6FRH8</accession>
<gene>
    <name evidence="6" type="primary">VPS15</name>
    <name type="ordered locus">CAGL0H08437g</name>
</gene>
<comment type="function">
    <text evidence="1 2 5">Serine/threonine-protein kinase that plays a role in signaling in modulation of host immune response, intracellular survival and virulence (PubMed:25223215). Required for impediment of phagosomal maturation in THP-1 macrophages (PubMed:25223215). Regulatory subunit of the autophagy-specific VPS34 PI3-kinase complex I essential to recruit the ATG8-phosphatidylinositol conjugate and the ATG12-ATG5 conjugate to the pre-autophagosomal structure (By similarity). Within the PS34 PI3-kinase complex I, VPS15-mediated phosphorylation of VPS34 may be required for recruiting VPS34 to the membrane but not for activation of its PI3K activity (PubMed:25223215). Is also involved in endosome-to-Golgi retrograde transport as part of the VPS34 PI3-kinase complex II (By similarity). This second complex is required for the endosome-to-Golgi retrieval of PEP1 and KEX2, and the recruitment of VPS5 and VPS7, two components of the retromer complex, to endosomal membranes (probably through the synthesis of a specific pool of phosphatidylinositol 3-phosphate recruiting the retromer to the endosomes) (By similarity). By regulating VPS34 kinase activity, VPS15 appears to be essential for the efficient delivery of soluble hydrolases to the yeast vacuole (By similarity).</text>
</comment>
<comment type="catalytic activity">
    <reaction evidence="1">
        <text>L-seryl-[protein] + ATP = O-phospho-L-seryl-[protein] + ADP + H(+)</text>
        <dbReference type="Rhea" id="RHEA:17989"/>
        <dbReference type="Rhea" id="RHEA-COMP:9863"/>
        <dbReference type="Rhea" id="RHEA-COMP:11604"/>
        <dbReference type="ChEBI" id="CHEBI:15378"/>
        <dbReference type="ChEBI" id="CHEBI:29999"/>
        <dbReference type="ChEBI" id="CHEBI:30616"/>
        <dbReference type="ChEBI" id="CHEBI:83421"/>
        <dbReference type="ChEBI" id="CHEBI:456216"/>
        <dbReference type="EC" id="2.7.11.1"/>
    </reaction>
    <physiologicalReaction direction="left-to-right" evidence="1">
        <dbReference type="Rhea" id="RHEA:17990"/>
    </physiologicalReaction>
</comment>
<comment type="catalytic activity">
    <reaction evidence="1">
        <text>L-threonyl-[protein] + ATP = O-phospho-L-threonyl-[protein] + ADP + H(+)</text>
        <dbReference type="Rhea" id="RHEA:46608"/>
        <dbReference type="Rhea" id="RHEA-COMP:11060"/>
        <dbReference type="Rhea" id="RHEA-COMP:11605"/>
        <dbReference type="ChEBI" id="CHEBI:15378"/>
        <dbReference type="ChEBI" id="CHEBI:30013"/>
        <dbReference type="ChEBI" id="CHEBI:30616"/>
        <dbReference type="ChEBI" id="CHEBI:61977"/>
        <dbReference type="ChEBI" id="CHEBI:456216"/>
        <dbReference type="EC" id="2.7.11.1"/>
    </reaction>
    <physiologicalReaction direction="left-to-right" evidence="1">
        <dbReference type="Rhea" id="RHEA:46609"/>
    </physiologicalReaction>
</comment>
<comment type="subunit">
    <text evidence="1">Component of the autophagy-specific VPS34 PI3-kinase complex I composed of VPS15, VPS30, VPS34, ATG14 and ATG38; and of the VPS34 PI3-kinase complex II composed of VPS15, VPS30, VPS34 and VPS38.</text>
</comment>
<comment type="subcellular location">
    <subcellularLocation>
        <location evidence="1">Golgi apparatus</location>
        <location evidence="1">trans-Golgi network membrane</location>
        <topology evidence="1">Lipid-anchor</topology>
    </subcellularLocation>
    <subcellularLocation>
        <location evidence="1">Endosome membrane</location>
        <topology evidence="1">Lipid-anchor</topology>
    </subcellularLocation>
</comment>
<comment type="PTM">
    <text evidence="1">Autophosphorylated.</text>
</comment>
<comment type="disruption phenotype">
    <text evidence="5">Leads to large vacuoles and defective respiratory growth (PubMed:25223215). Blocks maturation of the phagosomes and renders cells hyperadherent to epithelial cells and susceptible to the antimicrobial arsenal of primary murine and cultured human macrophages, as well as to thermal, salt, oxidative, genotoxic, cell wall and cell membrane stresses (PubMed:25223215). Displays defects in protein trafficking (PubMed:25223215).</text>
</comment>
<comment type="similarity">
    <text evidence="4">Belongs to the protein kinase superfamily. Ser/Thr protein kinase family.</text>
</comment>
<reference key="1">
    <citation type="journal article" date="2004" name="Nature">
        <title>Genome evolution in yeasts.</title>
        <authorList>
            <person name="Dujon B."/>
            <person name="Sherman D."/>
            <person name="Fischer G."/>
            <person name="Durrens P."/>
            <person name="Casaregola S."/>
            <person name="Lafontaine I."/>
            <person name="de Montigny J."/>
            <person name="Marck C."/>
            <person name="Neuveglise C."/>
            <person name="Talla E."/>
            <person name="Goffard N."/>
            <person name="Frangeul L."/>
            <person name="Aigle M."/>
            <person name="Anthouard V."/>
            <person name="Babour A."/>
            <person name="Barbe V."/>
            <person name="Barnay S."/>
            <person name="Blanchin S."/>
            <person name="Beckerich J.-M."/>
            <person name="Beyne E."/>
            <person name="Bleykasten C."/>
            <person name="Boisrame A."/>
            <person name="Boyer J."/>
            <person name="Cattolico L."/>
            <person name="Confanioleri F."/>
            <person name="de Daruvar A."/>
            <person name="Despons L."/>
            <person name="Fabre E."/>
            <person name="Fairhead C."/>
            <person name="Ferry-Dumazet H."/>
            <person name="Groppi A."/>
            <person name="Hantraye F."/>
            <person name="Hennequin C."/>
            <person name="Jauniaux N."/>
            <person name="Joyet P."/>
            <person name="Kachouri R."/>
            <person name="Kerrest A."/>
            <person name="Koszul R."/>
            <person name="Lemaire M."/>
            <person name="Lesur I."/>
            <person name="Ma L."/>
            <person name="Muller H."/>
            <person name="Nicaud J.-M."/>
            <person name="Nikolski M."/>
            <person name="Oztas S."/>
            <person name="Ozier-Kalogeropoulos O."/>
            <person name="Pellenz S."/>
            <person name="Potier S."/>
            <person name="Richard G.-F."/>
            <person name="Straub M.-L."/>
            <person name="Suleau A."/>
            <person name="Swennen D."/>
            <person name="Tekaia F."/>
            <person name="Wesolowski-Louvel M."/>
            <person name="Westhof E."/>
            <person name="Wirth B."/>
            <person name="Zeniou-Meyer M."/>
            <person name="Zivanovic Y."/>
            <person name="Bolotin-Fukuhara M."/>
            <person name="Thierry A."/>
            <person name="Bouchier C."/>
            <person name="Caudron B."/>
            <person name="Scarpelli C."/>
            <person name="Gaillardin C."/>
            <person name="Weissenbach J."/>
            <person name="Wincker P."/>
            <person name="Souciet J.-L."/>
        </authorList>
    </citation>
    <scope>NUCLEOTIDE SEQUENCE [LARGE SCALE GENOMIC DNA]</scope>
    <source>
        <strain>ATCC 2001 / BCRC 20586 / JCM 3761 / NBRC 0622 / NRRL Y-65 / CBS 138</strain>
    </source>
</reference>
<reference key="2">
    <citation type="journal article" date="2015" name="Cell. Microbiol.">
        <title>An essential role for phosphatidylinositol 3-kinase in the inhibition of phagosomal maturation, intracellular survival and virulence in Candida glabrata.</title>
        <authorList>
            <person name="Rai M.N."/>
            <person name="Sharma V."/>
            <person name="Balusu S."/>
            <person name="Kaur R."/>
        </authorList>
    </citation>
    <scope>FUNCTION</scope>
    <scope>DISRUPTION PHENOTYPE</scope>
</reference>
<dbReference type="EC" id="2.7.11.1" evidence="4"/>
<dbReference type="EMBL" id="CR380954">
    <property type="protein sequence ID" value="CAG60099.1"/>
    <property type="molecule type" value="Genomic_DNA"/>
</dbReference>
<dbReference type="RefSeq" id="XP_447166.1">
    <property type="nucleotide sequence ID" value="XM_447166.1"/>
</dbReference>
<dbReference type="SMR" id="Q6FRH8"/>
<dbReference type="FunCoup" id="Q6FRH8">
    <property type="interactions" value="947"/>
</dbReference>
<dbReference type="STRING" id="284593.Q6FRH8"/>
<dbReference type="EnsemblFungi" id="CAGL0H08437g-T">
    <property type="protein sequence ID" value="CAGL0H08437g-T-p1"/>
    <property type="gene ID" value="CAGL0H08437g"/>
</dbReference>
<dbReference type="GeneID" id="2888624"/>
<dbReference type="KEGG" id="cgr:2888624"/>
<dbReference type="CGD" id="CAL0131728">
    <property type="gene designation" value="VPS15"/>
</dbReference>
<dbReference type="VEuPathDB" id="FungiDB:CAGL0H08437g"/>
<dbReference type="eggNOG" id="KOG1240">
    <property type="taxonomic scope" value="Eukaryota"/>
</dbReference>
<dbReference type="HOGENOM" id="CLU_001696_0_1_1"/>
<dbReference type="InParanoid" id="Q6FRH8"/>
<dbReference type="OMA" id="YNLLCSW"/>
<dbReference type="PHI-base" id="PHI:3286"/>
<dbReference type="Proteomes" id="UP000002428">
    <property type="component" value="Chromosome H"/>
</dbReference>
<dbReference type="GO" id="GO:0010008">
    <property type="term" value="C:endosome membrane"/>
    <property type="evidence" value="ECO:0007669"/>
    <property type="project" value="UniProtKB-SubCell"/>
</dbReference>
<dbReference type="GO" id="GO:0005794">
    <property type="term" value="C:Golgi apparatus"/>
    <property type="evidence" value="ECO:0007669"/>
    <property type="project" value="UniProtKB-SubCell"/>
</dbReference>
<dbReference type="GO" id="GO:0005770">
    <property type="term" value="C:late endosome"/>
    <property type="evidence" value="ECO:0007669"/>
    <property type="project" value="TreeGrafter"/>
</dbReference>
<dbReference type="GO" id="GO:0071561">
    <property type="term" value="C:nucleus-vacuole junction"/>
    <property type="evidence" value="ECO:0007669"/>
    <property type="project" value="EnsemblFungi"/>
</dbReference>
<dbReference type="GO" id="GO:0034271">
    <property type="term" value="C:phosphatidylinositol 3-kinase complex, class III, type I"/>
    <property type="evidence" value="ECO:0007669"/>
    <property type="project" value="EnsemblFungi"/>
</dbReference>
<dbReference type="GO" id="GO:0034272">
    <property type="term" value="C:phosphatidylinositol 3-kinase complex, class III, type II"/>
    <property type="evidence" value="ECO:0007669"/>
    <property type="project" value="EnsemblFungi"/>
</dbReference>
<dbReference type="GO" id="GO:0120095">
    <property type="term" value="C:vacuole-isolation membrane contact site"/>
    <property type="evidence" value="ECO:0007669"/>
    <property type="project" value="EnsemblFungi"/>
</dbReference>
<dbReference type="GO" id="GO:0005524">
    <property type="term" value="F:ATP binding"/>
    <property type="evidence" value="ECO:0007669"/>
    <property type="project" value="UniProtKB-KW"/>
</dbReference>
<dbReference type="GO" id="GO:0004674">
    <property type="term" value="F:protein serine/threonine kinase activity"/>
    <property type="evidence" value="ECO:0007669"/>
    <property type="project" value="UniProtKB-KW"/>
</dbReference>
<dbReference type="GO" id="GO:0043130">
    <property type="term" value="F:ubiquitin binding"/>
    <property type="evidence" value="ECO:0007669"/>
    <property type="project" value="EnsemblFungi"/>
</dbReference>
<dbReference type="GO" id="GO:0051365">
    <property type="term" value="P:cellular response to potassium ion starvation"/>
    <property type="evidence" value="ECO:0007669"/>
    <property type="project" value="EnsemblFungi"/>
</dbReference>
<dbReference type="GO" id="GO:0045324">
    <property type="term" value="P:late endosome to vacuole transport"/>
    <property type="evidence" value="ECO:0007669"/>
    <property type="project" value="EnsemblFungi"/>
</dbReference>
<dbReference type="GO" id="GO:0000425">
    <property type="term" value="P:pexophagy"/>
    <property type="evidence" value="ECO:0007669"/>
    <property type="project" value="EnsemblFungi"/>
</dbReference>
<dbReference type="GO" id="GO:0046854">
    <property type="term" value="P:phosphatidylinositol phosphate biosynthetic process"/>
    <property type="evidence" value="ECO:0007669"/>
    <property type="project" value="EnsemblFungi"/>
</dbReference>
<dbReference type="GO" id="GO:0032968">
    <property type="term" value="P:positive regulation of transcription elongation by RNA polymerase II"/>
    <property type="evidence" value="ECO:0007669"/>
    <property type="project" value="EnsemblFungi"/>
</dbReference>
<dbReference type="GO" id="GO:0072665">
    <property type="term" value="P:protein localization to vacuole"/>
    <property type="evidence" value="ECO:0000315"/>
    <property type="project" value="CGD"/>
</dbReference>
<dbReference type="GO" id="GO:0045053">
    <property type="term" value="P:protein retention in Golgi apparatus"/>
    <property type="evidence" value="ECO:0007669"/>
    <property type="project" value="EnsemblFungi"/>
</dbReference>
<dbReference type="GO" id="GO:0006623">
    <property type="term" value="P:protein targeting to vacuole"/>
    <property type="evidence" value="ECO:0007669"/>
    <property type="project" value="EnsemblFungi"/>
</dbReference>
<dbReference type="GO" id="GO:0000011">
    <property type="term" value="P:vacuole inheritance"/>
    <property type="evidence" value="ECO:0007669"/>
    <property type="project" value="EnsemblFungi"/>
</dbReference>
<dbReference type="CDD" id="cd13980">
    <property type="entry name" value="STKc_Vps15"/>
    <property type="match status" value="1"/>
</dbReference>
<dbReference type="FunFam" id="1.10.510.10:FF:000497">
    <property type="entry name" value="Phosphoinositide 3-kinase regulatory subunit"/>
    <property type="match status" value="1"/>
</dbReference>
<dbReference type="Gene3D" id="1.25.10.10">
    <property type="entry name" value="Leucine-rich Repeat Variant"/>
    <property type="match status" value="2"/>
</dbReference>
<dbReference type="Gene3D" id="1.10.510.10">
    <property type="entry name" value="Transferase(Phosphotransferase) domain 1"/>
    <property type="match status" value="1"/>
</dbReference>
<dbReference type="Gene3D" id="2.130.10.10">
    <property type="entry name" value="YVTN repeat-like/Quinoprotein amine dehydrogenase"/>
    <property type="match status" value="1"/>
</dbReference>
<dbReference type="InterPro" id="IPR011989">
    <property type="entry name" value="ARM-like"/>
</dbReference>
<dbReference type="InterPro" id="IPR016024">
    <property type="entry name" value="ARM-type_fold"/>
</dbReference>
<dbReference type="InterPro" id="IPR021133">
    <property type="entry name" value="HEAT_type_2"/>
</dbReference>
<dbReference type="InterPro" id="IPR011009">
    <property type="entry name" value="Kinase-like_dom_sf"/>
</dbReference>
<dbReference type="InterPro" id="IPR000719">
    <property type="entry name" value="Prot_kinase_dom"/>
</dbReference>
<dbReference type="InterPro" id="IPR008271">
    <property type="entry name" value="Ser/Thr_kinase_AS"/>
</dbReference>
<dbReference type="InterPro" id="IPR045162">
    <property type="entry name" value="Vps15-like"/>
</dbReference>
<dbReference type="InterPro" id="IPR055231">
    <property type="entry name" value="VPS15-like_hel"/>
</dbReference>
<dbReference type="InterPro" id="IPR015943">
    <property type="entry name" value="WD40/YVTN_repeat-like_dom_sf"/>
</dbReference>
<dbReference type="InterPro" id="IPR036322">
    <property type="entry name" value="WD40_repeat_dom_sf"/>
</dbReference>
<dbReference type="PANTHER" id="PTHR17583">
    <property type="entry name" value="PHOSPHOINOSITIDE 3-KINASE REGULATORY SUBUNIT 4"/>
    <property type="match status" value="1"/>
</dbReference>
<dbReference type="PANTHER" id="PTHR17583:SF0">
    <property type="entry name" value="PHOSPHOINOSITIDE 3-KINASE REGULATORY SUBUNIT 4"/>
    <property type="match status" value="1"/>
</dbReference>
<dbReference type="Pfam" id="PF00069">
    <property type="entry name" value="Pkinase"/>
    <property type="match status" value="1"/>
</dbReference>
<dbReference type="Pfam" id="PF22956">
    <property type="entry name" value="VPS15-like_hel"/>
    <property type="match status" value="1"/>
</dbReference>
<dbReference type="SMART" id="SM00220">
    <property type="entry name" value="S_TKc"/>
    <property type="match status" value="1"/>
</dbReference>
<dbReference type="SUPFAM" id="SSF48371">
    <property type="entry name" value="ARM repeat"/>
    <property type="match status" value="1"/>
</dbReference>
<dbReference type="SUPFAM" id="SSF56112">
    <property type="entry name" value="Protein kinase-like (PK-like)"/>
    <property type="match status" value="1"/>
</dbReference>
<dbReference type="SUPFAM" id="SSF50978">
    <property type="entry name" value="WD40 repeat-like"/>
    <property type="match status" value="1"/>
</dbReference>
<dbReference type="PROSITE" id="PS50077">
    <property type="entry name" value="HEAT_REPEAT"/>
    <property type="match status" value="1"/>
</dbReference>
<dbReference type="PROSITE" id="PS50011">
    <property type="entry name" value="PROTEIN_KINASE_DOM"/>
    <property type="match status" value="1"/>
</dbReference>
<dbReference type="PROSITE" id="PS00108">
    <property type="entry name" value="PROTEIN_KINASE_ST"/>
    <property type="match status" value="1"/>
</dbReference>